<comment type="function">
    <text evidence="2">Catalyzes the transfer of a methyl group from 5-methyltetrahydrofolate to homocysteine resulting in methionine formation.</text>
</comment>
<comment type="catalytic activity">
    <reaction evidence="2">
        <text>5-methyltetrahydropteroyltri-L-glutamate + L-homocysteine = tetrahydropteroyltri-L-glutamate + L-methionine</text>
        <dbReference type="Rhea" id="RHEA:21196"/>
        <dbReference type="ChEBI" id="CHEBI:57844"/>
        <dbReference type="ChEBI" id="CHEBI:58140"/>
        <dbReference type="ChEBI" id="CHEBI:58199"/>
        <dbReference type="ChEBI" id="CHEBI:58207"/>
        <dbReference type="EC" id="2.1.1.14"/>
    </reaction>
</comment>
<comment type="cofactor">
    <cofactor evidence="2">
        <name>Zn(2+)</name>
        <dbReference type="ChEBI" id="CHEBI:29105"/>
    </cofactor>
    <text evidence="2">Binds 1 zinc ion per subunit.</text>
</comment>
<comment type="pathway">
    <text evidence="2">Amino-acid biosynthesis; L-methionine biosynthesis via de novo pathway; L-methionine from L-homocysteine (MetE route): step 1/1.</text>
</comment>
<comment type="similarity">
    <text evidence="2">Belongs to the vitamin-B12 independent methionine synthase family.</text>
</comment>
<protein>
    <recommendedName>
        <fullName evidence="2">5-methyltetrahydropteroyltriglutamate--homocysteine methyltransferase</fullName>
        <ecNumber evidence="2">2.1.1.14</ecNumber>
    </recommendedName>
    <alternativeName>
        <fullName evidence="2">Cobalamin-independent methionine synthase</fullName>
    </alternativeName>
    <alternativeName>
        <fullName evidence="2">Methionine synthase, vitamin-B12 independent isozyme</fullName>
    </alternativeName>
</protein>
<reference key="1">
    <citation type="journal article" date="2001" name="Nature">
        <title>Complete genome sequence of a multiple drug resistant Salmonella enterica serovar Typhi CT18.</title>
        <authorList>
            <person name="Parkhill J."/>
            <person name="Dougan G."/>
            <person name="James K.D."/>
            <person name="Thomson N.R."/>
            <person name="Pickard D."/>
            <person name="Wain J."/>
            <person name="Churcher C.M."/>
            <person name="Mungall K.L."/>
            <person name="Bentley S.D."/>
            <person name="Holden M.T.G."/>
            <person name="Sebaihia M."/>
            <person name="Baker S."/>
            <person name="Basham D."/>
            <person name="Brooks K."/>
            <person name="Chillingworth T."/>
            <person name="Connerton P."/>
            <person name="Cronin A."/>
            <person name="Davis P."/>
            <person name="Davies R.M."/>
            <person name="Dowd L."/>
            <person name="White N."/>
            <person name="Farrar J."/>
            <person name="Feltwell T."/>
            <person name="Hamlin N."/>
            <person name="Haque A."/>
            <person name="Hien T.T."/>
            <person name="Holroyd S."/>
            <person name="Jagels K."/>
            <person name="Krogh A."/>
            <person name="Larsen T.S."/>
            <person name="Leather S."/>
            <person name="Moule S."/>
            <person name="O'Gaora P."/>
            <person name="Parry C."/>
            <person name="Quail M.A."/>
            <person name="Rutherford K.M."/>
            <person name="Simmonds M."/>
            <person name="Skelton J."/>
            <person name="Stevens K."/>
            <person name="Whitehead S."/>
            <person name="Barrell B.G."/>
        </authorList>
    </citation>
    <scope>NUCLEOTIDE SEQUENCE [LARGE SCALE GENOMIC DNA]</scope>
    <source>
        <strain>CT18</strain>
    </source>
</reference>
<reference key="2">
    <citation type="journal article" date="2003" name="J. Bacteriol.">
        <title>Comparative genomics of Salmonella enterica serovar Typhi strains Ty2 and CT18.</title>
        <authorList>
            <person name="Deng W."/>
            <person name="Liou S.-R."/>
            <person name="Plunkett G. III"/>
            <person name="Mayhew G.F."/>
            <person name="Rose D.J."/>
            <person name="Burland V."/>
            <person name="Kodoyianni V."/>
            <person name="Schwartz D.C."/>
            <person name="Blattner F.R."/>
        </authorList>
    </citation>
    <scope>NUCLEOTIDE SEQUENCE [LARGE SCALE GENOMIC DNA]</scope>
    <source>
        <strain>ATCC 700931 / Ty2</strain>
    </source>
</reference>
<feature type="initiator methionine" description="Removed" evidence="1">
    <location>
        <position position="1"/>
    </location>
</feature>
<feature type="chain" id="PRO_0000098654" description="5-methyltetrahydropteroyltriglutamate--homocysteine methyltransferase">
    <location>
        <begin position="2"/>
        <end position="754"/>
    </location>
</feature>
<feature type="active site" description="Proton donor" evidence="2">
    <location>
        <position position="694"/>
    </location>
</feature>
<feature type="binding site" evidence="2">
    <location>
        <begin position="17"/>
        <end position="20"/>
    </location>
    <ligand>
        <name>5-methyltetrahydropteroyltri-L-glutamate</name>
        <dbReference type="ChEBI" id="CHEBI:58207"/>
    </ligand>
</feature>
<feature type="binding site" evidence="2">
    <location>
        <position position="117"/>
    </location>
    <ligand>
        <name>5-methyltetrahydropteroyltri-L-glutamate</name>
        <dbReference type="ChEBI" id="CHEBI:58207"/>
    </ligand>
</feature>
<feature type="binding site" evidence="2">
    <location>
        <begin position="431"/>
        <end position="433"/>
    </location>
    <ligand>
        <name>L-homocysteine</name>
        <dbReference type="ChEBI" id="CHEBI:58199"/>
    </ligand>
</feature>
<feature type="binding site" evidence="2">
    <location>
        <begin position="431"/>
        <end position="433"/>
    </location>
    <ligand>
        <name>L-methionine</name>
        <dbReference type="ChEBI" id="CHEBI:57844"/>
    </ligand>
</feature>
<feature type="binding site" evidence="2">
    <location>
        <position position="484"/>
    </location>
    <ligand>
        <name>L-homocysteine</name>
        <dbReference type="ChEBI" id="CHEBI:58199"/>
    </ligand>
</feature>
<feature type="binding site" evidence="2">
    <location>
        <position position="484"/>
    </location>
    <ligand>
        <name>L-methionine</name>
        <dbReference type="ChEBI" id="CHEBI:57844"/>
    </ligand>
</feature>
<feature type="binding site" evidence="2">
    <location>
        <begin position="515"/>
        <end position="516"/>
    </location>
    <ligand>
        <name>5-methyltetrahydropteroyltri-L-glutamate</name>
        <dbReference type="ChEBI" id="CHEBI:58207"/>
    </ligand>
</feature>
<feature type="binding site" evidence="2">
    <location>
        <position position="561"/>
    </location>
    <ligand>
        <name>5-methyltetrahydropteroyltri-L-glutamate</name>
        <dbReference type="ChEBI" id="CHEBI:58207"/>
    </ligand>
</feature>
<feature type="binding site" evidence="2">
    <location>
        <position position="599"/>
    </location>
    <ligand>
        <name>L-homocysteine</name>
        <dbReference type="ChEBI" id="CHEBI:58199"/>
    </ligand>
</feature>
<feature type="binding site" evidence="2">
    <location>
        <position position="599"/>
    </location>
    <ligand>
        <name>L-methionine</name>
        <dbReference type="ChEBI" id="CHEBI:57844"/>
    </ligand>
</feature>
<feature type="binding site" evidence="2">
    <location>
        <position position="605"/>
    </location>
    <ligand>
        <name>5-methyltetrahydropteroyltri-L-glutamate</name>
        <dbReference type="ChEBI" id="CHEBI:58207"/>
    </ligand>
</feature>
<feature type="binding site" evidence="2">
    <location>
        <position position="641"/>
    </location>
    <ligand>
        <name>Zn(2+)</name>
        <dbReference type="ChEBI" id="CHEBI:29105"/>
        <note>catalytic</note>
    </ligand>
</feature>
<feature type="binding site" evidence="2">
    <location>
        <position position="643"/>
    </location>
    <ligand>
        <name>Zn(2+)</name>
        <dbReference type="ChEBI" id="CHEBI:29105"/>
        <note>catalytic</note>
    </ligand>
</feature>
<feature type="binding site" evidence="2">
    <location>
        <position position="665"/>
    </location>
    <ligand>
        <name>Zn(2+)</name>
        <dbReference type="ChEBI" id="CHEBI:29105"/>
        <note>catalytic</note>
    </ligand>
</feature>
<feature type="binding site" evidence="2">
    <location>
        <position position="726"/>
    </location>
    <ligand>
        <name>Zn(2+)</name>
        <dbReference type="ChEBI" id="CHEBI:29105"/>
        <note>catalytic</note>
    </ligand>
</feature>
<sequence>MTILTHTLGFPRVGLRRELKKAQESYWAGNTTREALLAVGRELRARHWEQQKQAGIDLLPVGDFAWYDHVLTTSLLLGNVPARHQNNDGSVDIDTLFRIGRGRAPTGEPAAAAEMTKWFNTNYHYIVPEFSKGQQFRLTWTQLLEEVDEALALGHKIKPVLLGPVTYLWLGKVKGEPFDRLTLLKDILPVYQHVLAELAKRGVEWVQIDEPALVLELPQAWLDAFKPAYDALAGQVKLLLTTYFEGVTPNLDTIIVLPVQGLHVDLIHGKDDVVELHQRLPVDWLLSAGLINGRNVWRADLTEKYAQINAIVGKRALWVASSCSLLHSPIDLSVETRLDTEVKSWFAFALQKCGELALLRDALNSGETAALEEWSVPIQARRHSHRVHNAAVEKRLAAITAQDSQRENPYEVRAEAQRARFKLPAWPTTTIGSFPQTTEIRGLRLDFKKGNLDANNYRTGIAEHIKQAIIEQERLGLDVLVHGEAERNDMVEYFGEHLDGFVFTQNGWVQSYGSRCVKPPVVIGDISRPAPITVEWAKYAQSLTDKPVKGMLTGPVTILCWSFPREDVTRETIAKQIALALRDEVADLEAAGIGIIQIDEPALREGLPLRRSDWDAYLEWGVEAFRINAAVAKDETQIHTHMCYCEFNDIMDSIAALDADVITIETSRSDMELLESFEAFDYPNEIGPGVYDIHSPNVPSVEWIEALLKKAAQRIPAQRLWVNPDCGLKTRGWPETRAALANMVKAAHNLRQAK</sequence>
<name>METE_SALTI</name>
<gene>
    <name evidence="2" type="primary">metE</name>
    <name type="ordered locus">STY3594</name>
    <name type="ordered locus">t3332</name>
</gene>
<keyword id="KW-0028">Amino-acid biosynthesis</keyword>
<keyword id="KW-0479">Metal-binding</keyword>
<keyword id="KW-0486">Methionine biosynthesis</keyword>
<keyword id="KW-0489">Methyltransferase</keyword>
<keyword id="KW-0677">Repeat</keyword>
<keyword id="KW-0808">Transferase</keyword>
<keyword id="KW-0862">Zinc</keyword>
<evidence type="ECO:0000250" key="1"/>
<evidence type="ECO:0000255" key="2">
    <source>
        <dbReference type="HAMAP-Rule" id="MF_00172"/>
    </source>
</evidence>
<accession>Q8Z3B6</accession>
<organism>
    <name type="scientific">Salmonella typhi</name>
    <dbReference type="NCBI Taxonomy" id="90370"/>
    <lineage>
        <taxon>Bacteria</taxon>
        <taxon>Pseudomonadati</taxon>
        <taxon>Pseudomonadota</taxon>
        <taxon>Gammaproteobacteria</taxon>
        <taxon>Enterobacterales</taxon>
        <taxon>Enterobacteriaceae</taxon>
        <taxon>Salmonella</taxon>
    </lineage>
</organism>
<dbReference type="EC" id="2.1.1.14" evidence="2"/>
<dbReference type="EMBL" id="AL513382">
    <property type="protein sequence ID" value="CAD07927.1"/>
    <property type="molecule type" value="Genomic_DNA"/>
</dbReference>
<dbReference type="EMBL" id="AE014613">
    <property type="protein sequence ID" value="AAO70860.1"/>
    <property type="molecule type" value="Genomic_DNA"/>
</dbReference>
<dbReference type="RefSeq" id="NP_457786.1">
    <property type="nucleotide sequence ID" value="NC_003198.1"/>
</dbReference>
<dbReference type="RefSeq" id="WP_000154198.1">
    <property type="nucleotide sequence ID" value="NZ_WSUR01000033.1"/>
</dbReference>
<dbReference type="SMR" id="Q8Z3B6"/>
<dbReference type="STRING" id="220341.gene:17587446"/>
<dbReference type="KEGG" id="stt:t3332"/>
<dbReference type="KEGG" id="sty:STY3594"/>
<dbReference type="PATRIC" id="fig|220341.7.peg.3663"/>
<dbReference type="eggNOG" id="COG0620">
    <property type="taxonomic scope" value="Bacteria"/>
</dbReference>
<dbReference type="HOGENOM" id="CLU_013175_0_0_6"/>
<dbReference type="OMA" id="KVMKGML"/>
<dbReference type="OrthoDB" id="244285at2"/>
<dbReference type="UniPathway" id="UPA00051">
    <property type="reaction ID" value="UER00082"/>
</dbReference>
<dbReference type="Proteomes" id="UP000000541">
    <property type="component" value="Chromosome"/>
</dbReference>
<dbReference type="Proteomes" id="UP000002670">
    <property type="component" value="Chromosome"/>
</dbReference>
<dbReference type="GO" id="GO:0003871">
    <property type="term" value="F:5-methyltetrahydropteroyltriglutamate-homocysteine S-methyltransferase activity"/>
    <property type="evidence" value="ECO:0007669"/>
    <property type="project" value="UniProtKB-UniRule"/>
</dbReference>
<dbReference type="GO" id="GO:0008270">
    <property type="term" value="F:zinc ion binding"/>
    <property type="evidence" value="ECO:0007669"/>
    <property type="project" value="InterPro"/>
</dbReference>
<dbReference type="GO" id="GO:0009086">
    <property type="term" value="P:methionine biosynthetic process"/>
    <property type="evidence" value="ECO:0007669"/>
    <property type="project" value="UniProtKB-UniRule"/>
</dbReference>
<dbReference type="GO" id="GO:0032259">
    <property type="term" value="P:methylation"/>
    <property type="evidence" value="ECO:0007669"/>
    <property type="project" value="UniProtKB-KW"/>
</dbReference>
<dbReference type="CDD" id="cd03311">
    <property type="entry name" value="CIMS_C_terminal_like"/>
    <property type="match status" value="1"/>
</dbReference>
<dbReference type="CDD" id="cd03312">
    <property type="entry name" value="CIMS_N_terminal_like"/>
    <property type="match status" value="1"/>
</dbReference>
<dbReference type="FunFam" id="3.20.20.210:FF:000002">
    <property type="entry name" value="5-methyltetrahydropteroyltriglutamate--homocysteine methyltransferase"/>
    <property type="match status" value="1"/>
</dbReference>
<dbReference type="FunFam" id="3.20.20.210:FF:000003">
    <property type="entry name" value="5-methyltetrahydropteroyltriglutamate--homocysteine methyltransferase"/>
    <property type="match status" value="1"/>
</dbReference>
<dbReference type="Gene3D" id="3.20.20.210">
    <property type="match status" value="2"/>
</dbReference>
<dbReference type="HAMAP" id="MF_00172">
    <property type="entry name" value="Meth_synth"/>
    <property type="match status" value="1"/>
</dbReference>
<dbReference type="InterPro" id="IPR013215">
    <property type="entry name" value="Cbl-indep_Met_Synth_N"/>
</dbReference>
<dbReference type="InterPro" id="IPR006276">
    <property type="entry name" value="Cobalamin-indep_Met_synthase"/>
</dbReference>
<dbReference type="InterPro" id="IPR002629">
    <property type="entry name" value="Met_Synth_C/arc"/>
</dbReference>
<dbReference type="InterPro" id="IPR038071">
    <property type="entry name" value="UROD/MetE-like_sf"/>
</dbReference>
<dbReference type="NCBIfam" id="TIGR01371">
    <property type="entry name" value="met_syn_B12ind"/>
    <property type="match status" value="1"/>
</dbReference>
<dbReference type="NCBIfam" id="NF003556">
    <property type="entry name" value="PRK05222.1"/>
    <property type="match status" value="1"/>
</dbReference>
<dbReference type="PANTHER" id="PTHR30519">
    <property type="entry name" value="5-METHYLTETRAHYDROPTEROYLTRIGLUTAMATE--HOMOCYSTEINE METHYLTRANSFERASE"/>
    <property type="match status" value="1"/>
</dbReference>
<dbReference type="Pfam" id="PF08267">
    <property type="entry name" value="Meth_synt_1"/>
    <property type="match status" value="1"/>
</dbReference>
<dbReference type="Pfam" id="PF01717">
    <property type="entry name" value="Meth_synt_2"/>
    <property type="match status" value="1"/>
</dbReference>
<dbReference type="PIRSF" id="PIRSF000382">
    <property type="entry name" value="MeTrfase_B12_ind"/>
    <property type="match status" value="1"/>
</dbReference>
<dbReference type="SUPFAM" id="SSF51726">
    <property type="entry name" value="UROD/MetE-like"/>
    <property type="match status" value="2"/>
</dbReference>
<proteinExistence type="inferred from homology"/>